<feature type="chain" id="PRO_0000123207" description="Small ribosomal subunit protein uS11">
    <location>
        <begin position="1"/>
        <end position="127"/>
    </location>
</feature>
<keyword id="KW-1185">Reference proteome</keyword>
<keyword id="KW-0687">Ribonucleoprotein</keyword>
<keyword id="KW-0689">Ribosomal protein</keyword>
<keyword id="KW-0694">RNA-binding</keyword>
<keyword id="KW-0699">rRNA-binding</keyword>
<organism>
    <name type="scientific">Rhodopirellula baltica (strain DSM 10527 / NCIMB 13988 / SH1)</name>
    <dbReference type="NCBI Taxonomy" id="243090"/>
    <lineage>
        <taxon>Bacteria</taxon>
        <taxon>Pseudomonadati</taxon>
        <taxon>Planctomycetota</taxon>
        <taxon>Planctomycetia</taxon>
        <taxon>Pirellulales</taxon>
        <taxon>Pirellulaceae</taxon>
        <taxon>Rhodopirellula</taxon>
    </lineage>
</organism>
<evidence type="ECO:0000255" key="1">
    <source>
        <dbReference type="HAMAP-Rule" id="MF_01310"/>
    </source>
</evidence>
<evidence type="ECO:0000305" key="2"/>
<gene>
    <name evidence="1" type="primary">rpsK</name>
    <name type="ordered locus">RB12625</name>
</gene>
<accession>Q7UIC6</accession>
<proteinExistence type="inferred from homology"/>
<comment type="function">
    <text evidence="1">Located on the platform of the 30S subunit, it bridges several disparate RNA helices of the 16S rRNA. Forms part of the Shine-Dalgarno cleft in the 70S ribosome.</text>
</comment>
<comment type="subunit">
    <text evidence="1">Part of the 30S ribosomal subunit. Interacts with proteins S7 and S18. Binds to IF-3.</text>
</comment>
<comment type="similarity">
    <text evidence="1">Belongs to the universal ribosomal protein uS11 family.</text>
</comment>
<reference key="1">
    <citation type="journal article" date="2003" name="Proc. Natl. Acad. Sci. U.S.A.">
        <title>Complete genome sequence of the marine planctomycete Pirellula sp. strain 1.</title>
        <authorList>
            <person name="Gloeckner F.O."/>
            <person name="Kube M."/>
            <person name="Bauer M."/>
            <person name="Teeling H."/>
            <person name="Lombardot T."/>
            <person name="Ludwig W."/>
            <person name="Gade D."/>
            <person name="Beck A."/>
            <person name="Borzym K."/>
            <person name="Heitmann K."/>
            <person name="Rabus R."/>
            <person name="Schlesner H."/>
            <person name="Amann R."/>
            <person name="Reinhardt R."/>
        </authorList>
    </citation>
    <scope>NUCLEOTIDE SEQUENCE [LARGE SCALE GENOMIC DNA]</scope>
    <source>
        <strain>DSM 10527 / NCIMB 13988 / SH1</strain>
    </source>
</reference>
<protein>
    <recommendedName>
        <fullName evidence="1">Small ribosomal subunit protein uS11</fullName>
    </recommendedName>
    <alternativeName>
        <fullName evidence="2">30S ribosomal protein S11</fullName>
    </alternativeName>
</protein>
<sequence length="127" mass="13603">MAKTNKKKRIRRNVSNGVAHVHATFNNTTVTITDAKGDTLCWASAGTSGFKGSRKSTPFAGQCAAQQAAEKATKFGMRDVEVRVKGPGSGRESAITALQAAGLNVKLIEEVTPIPHNGCRPRKKRRV</sequence>
<name>RS11_RHOBA</name>
<dbReference type="EMBL" id="BX294155">
    <property type="protein sequence ID" value="CAD77688.1"/>
    <property type="molecule type" value="Genomic_DNA"/>
</dbReference>
<dbReference type="RefSeq" id="NP_870611.1">
    <property type="nucleotide sequence ID" value="NC_005027.1"/>
</dbReference>
<dbReference type="RefSeq" id="WP_007328401.1">
    <property type="nucleotide sequence ID" value="NC_005027.1"/>
</dbReference>
<dbReference type="SMR" id="Q7UIC6"/>
<dbReference type="FunCoup" id="Q7UIC6">
    <property type="interactions" value="543"/>
</dbReference>
<dbReference type="STRING" id="243090.RB12625"/>
<dbReference type="EnsemblBacteria" id="CAD77688">
    <property type="protein sequence ID" value="CAD77688"/>
    <property type="gene ID" value="RB12625"/>
</dbReference>
<dbReference type="GeneID" id="90610388"/>
<dbReference type="KEGG" id="rba:RB12625"/>
<dbReference type="PATRIC" id="fig|243090.15.peg.6122"/>
<dbReference type="eggNOG" id="COG0100">
    <property type="taxonomic scope" value="Bacteria"/>
</dbReference>
<dbReference type="HOGENOM" id="CLU_072439_5_0_0"/>
<dbReference type="InParanoid" id="Q7UIC6"/>
<dbReference type="OrthoDB" id="9806415at2"/>
<dbReference type="Proteomes" id="UP000001025">
    <property type="component" value="Chromosome"/>
</dbReference>
<dbReference type="GO" id="GO:0022627">
    <property type="term" value="C:cytosolic small ribosomal subunit"/>
    <property type="evidence" value="ECO:0000318"/>
    <property type="project" value="GO_Central"/>
</dbReference>
<dbReference type="GO" id="GO:0019843">
    <property type="term" value="F:rRNA binding"/>
    <property type="evidence" value="ECO:0007669"/>
    <property type="project" value="UniProtKB-UniRule"/>
</dbReference>
<dbReference type="GO" id="GO:0003735">
    <property type="term" value="F:structural constituent of ribosome"/>
    <property type="evidence" value="ECO:0000318"/>
    <property type="project" value="GO_Central"/>
</dbReference>
<dbReference type="GO" id="GO:0006412">
    <property type="term" value="P:translation"/>
    <property type="evidence" value="ECO:0000318"/>
    <property type="project" value="GO_Central"/>
</dbReference>
<dbReference type="FunFam" id="3.30.420.80:FF:000020">
    <property type="entry name" value="30S ribosomal protein S11"/>
    <property type="match status" value="1"/>
</dbReference>
<dbReference type="Gene3D" id="3.30.420.80">
    <property type="entry name" value="Ribosomal protein S11"/>
    <property type="match status" value="1"/>
</dbReference>
<dbReference type="HAMAP" id="MF_01310">
    <property type="entry name" value="Ribosomal_uS11"/>
    <property type="match status" value="1"/>
</dbReference>
<dbReference type="InterPro" id="IPR001971">
    <property type="entry name" value="Ribosomal_uS11"/>
</dbReference>
<dbReference type="InterPro" id="IPR019981">
    <property type="entry name" value="Ribosomal_uS11_bac-type"/>
</dbReference>
<dbReference type="InterPro" id="IPR018102">
    <property type="entry name" value="Ribosomal_uS11_CS"/>
</dbReference>
<dbReference type="InterPro" id="IPR036967">
    <property type="entry name" value="Ribosomal_uS11_sf"/>
</dbReference>
<dbReference type="NCBIfam" id="NF003698">
    <property type="entry name" value="PRK05309.1"/>
    <property type="match status" value="1"/>
</dbReference>
<dbReference type="NCBIfam" id="TIGR03632">
    <property type="entry name" value="uS11_bact"/>
    <property type="match status" value="1"/>
</dbReference>
<dbReference type="PANTHER" id="PTHR11759">
    <property type="entry name" value="40S RIBOSOMAL PROTEIN S14/30S RIBOSOMAL PROTEIN S11"/>
    <property type="match status" value="1"/>
</dbReference>
<dbReference type="Pfam" id="PF00411">
    <property type="entry name" value="Ribosomal_S11"/>
    <property type="match status" value="1"/>
</dbReference>
<dbReference type="PIRSF" id="PIRSF002131">
    <property type="entry name" value="Ribosomal_S11"/>
    <property type="match status" value="1"/>
</dbReference>
<dbReference type="SUPFAM" id="SSF53137">
    <property type="entry name" value="Translational machinery components"/>
    <property type="match status" value="1"/>
</dbReference>
<dbReference type="PROSITE" id="PS00054">
    <property type="entry name" value="RIBOSOMAL_S11"/>
    <property type="match status" value="1"/>
</dbReference>